<organism>
    <name type="scientific">Buchnera aphidicola subsp. Acyrthosiphon pisum (strain APS)</name>
    <name type="common">Acyrthosiphon pisum symbiotic bacterium</name>
    <dbReference type="NCBI Taxonomy" id="107806"/>
    <lineage>
        <taxon>Bacteria</taxon>
        <taxon>Pseudomonadati</taxon>
        <taxon>Pseudomonadota</taxon>
        <taxon>Gammaproteobacteria</taxon>
        <taxon>Enterobacterales</taxon>
        <taxon>Erwiniaceae</taxon>
        <taxon>Buchnera</taxon>
    </lineage>
</organism>
<reference key="1">
    <citation type="journal article" date="2000" name="Nature">
        <title>Genome sequence of the endocellular bacterial symbiont of aphids Buchnera sp. APS.</title>
        <authorList>
            <person name="Shigenobu S."/>
            <person name="Watanabe H."/>
            <person name="Hattori M."/>
            <person name="Sakaki Y."/>
            <person name="Ishikawa H."/>
        </authorList>
    </citation>
    <scope>NUCLEOTIDE SEQUENCE [LARGE SCALE GENOMIC DNA]</scope>
    <source>
        <strain>APS</strain>
    </source>
</reference>
<dbReference type="EC" id="2.4.99.17" evidence="1"/>
<dbReference type="EMBL" id="BA000003">
    <property type="protein sequence ID" value="BAB12850.1"/>
    <property type="molecule type" value="Genomic_DNA"/>
</dbReference>
<dbReference type="RefSeq" id="NP_239964.1">
    <property type="nucleotide sequence ID" value="NC_002528.1"/>
</dbReference>
<dbReference type="RefSeq" id="WP_010895965.1">
    <property type="nucleotide sequence ID" value="NC_002528.1"/>
</dbReference>
<dbReference type="SMR" id="P57232"/>
<dbReference type="STRING" id="563178.BUAP5A_130"/>
<dbReference type="EnsemblBacteria" id="BAB12850">
    <property type="protein sequence ID" value="BAB12850"/>
    <property type="gene ID" value="BAB12850"/>
</dbReference>
<dbReference type="KEGG" id="buc:BU132"/>
<dbReference type="PATRIC" id="fig|107806.10.peg.141"/>
<dbReference type="eggNOG" id="COG0809">
    <property type="taxonomic scope" value="Bacteria"/>
</dbReference>
<dbReference type="HOGENOM" id="CLU_039110_1_0_6"/>
<dbReference type="UniPathway" id="UPA00392"/>
<dbReference type="Proteomes" id="UP000001806">
    <property type="component" value="Chromosome"/>
</dbReference>
<dbReference type="GO" id="GO:0005737">
    <property type="term" value="C:cytoplasm"/>
    <property type="evidence" value="ECO:0007669"/>
    <property type="project" value="UniProtKB-SubCell"/>
</dbReference>
<dbReference type="GO" id="GO:0051075">
    <property type="term" value="F:S-adenosylmethionine:tRNA ribosyltransferase-isomerase activity"/>
    <property type="evidence" value="ECO:0007669"/>
    <property type="project" value="UniProtKB-EC"/>
</dbReference>
<dbReference type="GO" id="GO:0008616">
    <property type="term" value="P:queuosine biosynthetic process"/>
    <property type="evidence" value="ECO:0007669"/>
    <property type="project" value="UniProtKB-UniRule"/>
</dbReference>
<dbReference type="GO" id="GO:0002099">
    <property type="term" value="P:tRNA wobble guanine modification"/>
    <property type="evidence" value="ECO:0007669"/>
    <property type="project" value="TreeGrafter"/>
</dbReference>
<dbReference type="FunFam" id="3.40.1780.10:FF:000001">
    <property type="entry name" value="S-adenosylmethionine:tRNA ribosyltransferase-isomerase"/>
    <property type="match status" value="1"/>
</dbReference>
<dbReference type="Gene3D" id="2.40.10.240">
    <property type="entry name" value="QueA-like"/>
    <property type="match status" value="1"/>
</dbReference>
<dbReference type="Gene3D" id="3.40.1780.10">
    <property type="entry name" value="QueA-like"/>
    <property type="match status" value="1"/>
</dbReference>
<dbReference type="HAMAP" id="MF_00113">
    <property type="entry name" value="QueA"/>
    <property type="match status" value="1"/>
</dbReference>
<dbReference type="InterPro" id="IPR003699">
    <property type="entry name" value="QueA"/>
</dbReference>
<dbReference type="InterPro" id="IPR042118">
    <property type="entry name" value="QueA_dom1"/>
</dbReference>
<dbReference type="InterPro" id="IPR042119">
    <property type="entry name" value="QueA_dom2"/>
</dbReference>
<dbReference type="InterPro" id="IPR036100">
    <property type="entry name" value="QueA_sf"/>
</dbReference>
<dbReference type="NCBIfam" id="NF001140">
    <property type="entry name" value="PRK00147.1"/>
    <property type="match status" value="1"/>
</dbReference>
<dbReference type="NCBIfam" id="TIGR00113">
    <property type="entry name" value="queA"/>
    <property type="match status" value="1"/>
</dbReference>
<dbReference type="PANTHER" id="PTHR30307">
    <property type="entry name" value="S-ADENOSYLMETHIONINE:TRNA RIBOSYLTRANSFERASE-ISOMERASE"/>
    <property type="match status" value="1"/>
</dbReference>
<dbReference type="PANTHER" id="PTHR30307:SF0">
    <property type="entry name" value="S-ADENOSYLMETHIONINE:TRNA RIBOSYLTRANSFERASE-ISOMERASE"/>
    <property type="match status" value="1"/>
</dbReference>
<dbReference type="Pfam" id="PF02547">
    <property type="entry name" value="Queuosine_synth"/>
    <property type="match status" value="1"/>
</dbReference>
<dbReference type="SUPFAM" id="SSF111337">
    <property type="entry name" value="QueA-like"/>
    <property type="match status" value="1"/>
</dbReference>
<accession>P57232</accession>
<evidence type="ECO:0000255" key="1">
    <source>
        <dbReference type="HAMAP-Rule" id="MF_00113"/>
    </source>
</evidence>
<feature type="chain" id="PRO_0000165388" description="S-adenosylmethionine:tRNA ribosyltransferase-isomerase">
    <location>
        <begin position="1"/>
        <end position="357"/>
    </location>
</feature>
<protein>
    <recommendedName>
        <fullName evidence="1">S-adenosylmethionine:tRNA ribosyltransferase-isomerase</fullName>
        <ecNumber evidence="1">2.4.99.17</ecNumber>
    </recommendedName>
    <alternativeName>
        <fullName evidence="1">Queuosine biosynthesis protein QueA</fullName>
    </alternativeName>
</protein>
<keyword id="KW-0963">Cytoplasm</keyword>
<keyword id="KW-0671">Queuosine biosynthesis</keyword>
<keyword id="KW-1185">Reference proteome</keyword>
<keyword id="KW-0949">S-adenosyl-L-methionine</keyword>
<keyword id="KW-0808">Transferase</keyword>
<gene>
    <name evidence="1" type="primary">queA</name>
    <name type="ordered locus">BU132</name>
</gene>
<sequence>MQLSDFSFDLPKSLISFHPYFIRSTCRLMVMYGHTGMIFHKRFFNIIDEINSGDLIILNNTQVIPARFFGKKESGGKVEVLVEKILGINNILASIKNSKNINIGSKIFFGYKDKIKGSVVDCKNSFFEIFFHDNIDSAIDIINNIGEIPLPPYIKRFRNKLDVDLYQTVYKKKTGSIAAPTAGLHFDLPLLEALHNKGVDIDYITLHIGSGTFQPIRRVQIEEHIMHSESVEVSSSVIQKIKSCKKKGGRIIAVGTSTLRALESAYHSSEWSDSQDFISDTNIFIYPGYKHNIVDALITNFHFPESTLIMLVCSFLGYKNTMNAYNTAIVNKYSFFSYGDAMYITHNKLAPYENFII</sequence>
<name>QUEA_BUCAI</name>
<comment type="function">
    <text evidence="1">Transfers and isomerizes the ribose moiety from AdoMet to the 7-aminomethyl group of 7-deazaguanine (preQ1-tRNA) to give epoxyqueuosine (oQ-tRNA).</text>
</comment>
<comment type="catalytic activity">
    <reaction evidence="1">
        <text>7-aminomethyl-7-carbaguanosine(34) in tRNA + S-adenosyl-L-methionine = epoxyqueuosine(34) in tRNA + adenine + L-methionine + 2 H(+)</text>
        <dbReference type="Rhea" id="RHEA:32155"/>
        <dbReference type="Rhea" id="RHEA-COMP:10342"/>
        <dbReference type="Rhea" id="RHEA-COMP:18582"/>
        <dbReference type="ChEBI" id="CHEBI:15378"/>
        <dbReference type="ChEBI" id="CHEBI:16708"/>
        <dbReference type="ChEBI" id="CHEBI:57844"/>
        <dbReference type="ChEBI" id="CHEBI:59789"/>
        <dbReference type="ChEBI" id="CHEBI:82833"/>
        <dbReference type="ChEBI" id="CHEBI:194443"/>
        <dbReference type="EC" id="2.4.99.17"/>
    </reaction>
</comment>
<comment type="pathway">
    <text evidence="1">tRNA modification; tRNA-queuosine biosynthesis.</text>
</comment>
<comment type="subunit">
    <text evidence="1">Monomer.</text>
</comment>
<comment type="subcellular location">
    <subcellularLocation>
        <location evidence="1">Cytoplasm</location>
    </subcellularLocation>
</comment>
<comment type="similarity">
    <text evidence="1">Belongs to the QueA family.</text>
</comment>
<proteinExistence type="inferred from homology"/>